<gene>
    <name evidence="1" type="primary">tsaD</name>
    <name type="synonym">gcp</name>
    <name type="ordered locus">SEN3051</name>
</gene>
<proteinExistence type="inferred from homology"/>
<evidence type="ECO:0000255" key="1">
    <source>
        <dbReference type="HAMAP-Rule" id="MF_01445"/>
    </source>
</evidence>
<comment type="function">
    <text evidence="1">Required for the formation of a threonylcarbamoyl group on adenosine at position 37 (t(6)A37) in tRNAs that read codons beginning with adenine. Is involved in the transfer of the threonylcarbamoyl moiety of threonylcarbamoyl-AMP (TC-AMP) to the N6 group of A37, together with TsaE and TsaB. TsaD likely plays a direct catalytic role in this reaction.</text>
</comment>
<comment type="catalytic activity">
    <reaction evidence="1">
        <text>L-threonylcarbamoyladenylate + adenosine(37) in tRNA = N(6)-L-threonylcarbamoyladenosine(37) in tRNA + AMP + H(+)</text>
        <dbReference type="Rhea" id="RHEA:37059"/>
        <dbReference type="Rhea" id="RHEA-COMP:10162"/>
        <dbReference type="Rhea" id="RHEA-COMP:10163"/>
        <dbReference type="ChEBI" id="CHEBI:15378"/>
        <dbReference type="ChEBI" id="CHEBI:73682"/>
        <dbReference type="ChEBI" id="CHEBI:74411"/>
        <dbReference type="ChEBI" id="CHEBI:74418"/>
        <dbReference type="ChEBI" id="CHEBI:456215"/>
        <dbReference type="EC" id="2.3.1.234"/>
    </reaction>
</comment>
<comment type="cofactor">
    <cofactor evidence="1">
        <name>Fe(2+)</name>
        <dbReference type="ChEBI" id="CHEBI:29033"/>
    </cofactor>
    <text evidence="1">Binds 1 Fe(2+) ion per subunit.</text>
</comment>
<comment type="subcellular location">
    <subcellularLocation>
        <location evidence="1">Cytoplasm</location>
    </subcellularLocation>
</comment>
<comment type="similarity">
    <text evidence="1">Belongs to the KAE1 / TsaD family.</text>
</comment>
<accession>B5QZ44</accession>
<dbReference type="EC" id="2.3.1.234" evidence="1"/>
<dbReference type="EMBL" id="AM933172">
    <property type="protein sequence ID" value="CAR34627.1"/>
    <property type="molecule type" value="Genomic_DNA"/>
</dbReference>
<dbReference type="RefSeq" id="WP_001264394.1">
    <property type="nucleotide sequence ID" value="NC_011294.1"/>
</dbReference>
<dbReference type="SMR" id="B5QZ44"/>
<dbReference type="KEGG" id="set:SEN3051"/>
<dbReference type="HOGENOM" id="CLU_023208_0_0_6"/>
<dbReference type="Proteomes" id="UP000000613">
    <property type="component" value="Chromosome"/>
</dbReference>
<dbReference type="GO" id="GO:0005737">
    <property type="term" value="C:cytoplasm"/>
    <property type="evidence" value="ECO:0007669"/>
    <property type="project" value="UniProtKB-SubCell"/>
</dbReference>
<dbReference type="GO" id="GO:0005506">
    <property type="term" value="F:iron ion binding"/>
    <property type="evidence" value="ECO:0007669"/>
    <property type="project" value="UniProtKB-UniRule"/>
</dbReference>
<dbReference type="GO" id="GO:0061711">
    <property type="term" value="F:N(6)-L-threonylcarbamoyladenine synthase activity"/>
    <property type="evidence" value="ECO:0007669"/>
    <property type="project" value="UniProtKB-EC"/>
</dbReference>
<dbReference type="GO" id="GO:0002949">
    <property type="term" value="P:tRNA threonylcarbamoyladenosine modification"/>
    <property type="evidence" value="ECO:0007669"/>
    <property type="project" value="UniProtKB-UniRule"/>
</dbReference>
<dbReference type="CDD" id="cd24097">
    <property type="entry name" value="ASKHA_NBD_TsaD-like"/>
    <property type="match status" value="1"/>
</dbReference>
<dbReference type="FunFam" id="3.30.420.40:FF:000031">
    <property type="entry name" value="tRNA N6-adenosine threonylcarbamoyltransferase"/>
    <property type="match status" value="1"/>
</dbReference>
<dbReference type="Gene3D" id="3.30.420.40">
    <property type="match status" value="2"/>
</dbReference>
<dbReference type="HAMAP" id="MF_01445">
    <property type="entry name" value="TsaD"/>
    <property type="match status" value="1"/>
</dbReference>
<dbReference type="InterPro" id="IPR043129">
    <property type="entry name" value="ATPase_NBD"/>
</dbReference>
<dbReference type="InterPro" id="IPR000905">
    <property type="entry name" value="Gcp-like_dom"/>
</dbReference>
<dbReference type="InterPro" id="IPR017861">
    <property type="entry name" value="KAE1/TsaD"/>
</dbReference>
<dbReference type="InterPro" id="IPR017860">
    <property type="entry name" value="Peptidase_M22_CS"/>
</dbReference>
<dbReference type="InterPro" id="IPR022450">
    <property type="entry name" value="TsaD"/>
</dbReference>
<dbReference type="NCBIfam" id="TIGR00329">
    <property type="entry name" value="gcp_kae1"/>
    <property type="match status" value="1"/>
</dbReference>
<dbReference type="NCBIfam" id="TIGR03723">
    <property type="entry name" value="T6A_TsaD_YgjD"/>
    <property type="match status" value="1"/>
</dbReference>
<dbReference type="PANTHER" id="PTHR11735">
    <property type="entry name" value="TRNA N6-ADENOSINE THREONYLCARBAMOYLTRANSFERASE"/>
    <property type="match status" value="1"/>
</dbReference>
<dbReference type="PANTHER" id="PTHR11735:SF6">
    <property type="entry name" value="TRNA N6-ADENOSINE THREONYLCARBAMOYLTRANSFERASE, MITOCHONDRIAL"/>
    <property type="match status" value="1"/>
</dbReference>
<dbReference type="Pfam" id="PF00814">
    <property type="entry name" value="TsaD"/>
    <property type="match status" value="1"/>
</dbReference>
<dbReference type="PRINTS" id="PR00789">
    <property type="entry name" value="OSIALOPTASE"/>
</dbReference>
<dbReference type="SUPFAM" id="SSF53067">
    <property type="entry name" value="Actin-like ATPase domain"/>
    <property type="match status" value="1"/>
</dbReference>
<dbReference type="PROSITE" id="PS01016">
    <property type="entry name" value="GLYCOPROTEASE"/>
    <property type="match status" value="1"/>
</dbReference>
<feature type="chain" id="PRO_1000146016" description="tRNA N6-adenosine threonylcarbamoyltransferase">
    <location>
        <begin position="1"/>
        <end position="337"/>
    </location>
</feature>
<feature type="binding site" evidence="1">
    <location>
        <position position="111"/>
    </location>
    <ligand>
        <name>Fe cation</name>
        <dbReference type="ChEBI" id="CHEBI:24875"/>
    </ligand>
</feature>
<feature type="binding site" evidence="1">
    <location>
        <position position="115"/>
    </location>
    <ligand>
        <name>Fe cation</name>
        <dbReference type="ChEBI" id="CHEBI:24875"/>
    </ligand>
</feature>
<feature type="binding site" evidence="1">
    <location>
        <begin position="134"/>
        <end position="138"/>
    </location>
    <ligand>
        <name>substrate</name>
    </ligand>
</feature>
<feature type="binding site" evidence="1">
    <location>
        <position position="167"/>
    </location>
    <ligand>
        <name>substrate</name>
    </ligand>
</feature>
<feature type="binding site" evidence="1">
    <location>
        <position position="180"/>
    </location>
    <ligand>
        <name>substrate</name>
    </ligand>
</feature>
<feature type="binding site" evidence="1">
    <location>
        <position position="272"/>
    </location>
    <ligand>
        <name>substrate</name>
    </ligand>
</feature>
<feature type="binding site" evidence="1">
    <location>
        <position position="300"/>
    </location>
    <ligand>
        <name>Fe cation</name>
        <dbReference type="ChEBI" id="CHEBI:24875"/>
    </ligand>
</feature>
<name>TSAD_SALEP</name>
<sequence length="337" mass="35940">MRVLGIETSCDETGIAIYDDKKGLLANQLYSQVKLHADYGGVVPELASRDHVRKTVPLIQAALKEAGLTASDIDAVAYTAGPGLVGALLVGATVGRSLAFAWNVPAIPVHHMEGHLLAPMLEDNPPEFPFVALLVSGGHTQLISVTGIGQYELLGESIDDAAGEAFDKTAKLLGLDYPGGPMLSKMASQGTAGRFVFPRPMTDRPGLDFSFSGLKTFAANTIRSNGGDEQTRADIARAFEDAVVDTLMIKCKRALESTGFKRLVMAGGVSANRTLRAKLAEMMQKRRGEVFYARPEFCTDNGAMIAYAGMVRFKAGVTADLGVTVRPRWPLAELPAA</sequence>
<protein>
    <recommendedName>
        <fullName evidence="1">tRNA N6-adenosine threonylcarbamoyltransferase</fullName>
        <ecNumber evidence="1">2.3.1.234</ecNumber>
    </recommendedName>
    <alternativeName>
        <fullName evidence="1">N6-L-threonylcarbamoyladenine synthase</fullName>
        <shortName evidence="1">t(6)A synthase</shortName>
    </alternativeName>
    <alternativeName>
        <fullName evidence="1">t(6)A37 threonylcarbamoyladenosine biosynthesis protein TsaD</fullName>
    </alternativeName>
    <alternativeName>
        <fullName evidence="1">tRNA threonylcarbamoyladenosine biosynthesis protein TsaD</fullName>
    </alternativeName>
</protein>
<organism>
    <name type="scientific">Salmonella enteritidis PT4 (strain P125109)</name>
    <dbReference type="NCBI Taxonomy" id="550537"/>
    <lineage>
        <taxon>Bacteria</taxon>
        <taxon>Pseudomonadati</taxon>
        <taxon>Pseudomonadota</taxon>
        <taxon>Gammaproteobacteria</taxon>
        <taxon>Enterobacterales</taxon>
        <taxon>Enterobacteriaceae</taxon>
        <taxon>Salmonella</taxon>
    </lineage>
</organism>
<reference key="1">
    <citation type="journal article" date="2008" name="Genome Res.">
        <title>Comparative genome analysis of Salmonella enteritidis PT4 and Salmonella gallinarum 287/91 provides insights into evolutionary and host adaptation pathways.</title>
        <authorList>
            <person name="Thomson N.R."/>
            <person name="Clayton D.J."/>
            <person name="Windhorst D."/>
            <person name="Vernikos G."/>
            <person name="Davidson S."/>
            <person name="Churcher C."/>
            <person name="Quail M.A."/>
            <person name="Stevens M."/>
            <person name="Jones M.A."/>
            <person name="Watson M."/>
            <person name="Barron A."/>
            <person name="Layton A."/>
            <person name="Pickard D."/>
            <person name="Kingsley R.A."/>
            <person name="Bignell A."/>
            <person name="Clark L."/>
            <person name="Harris B."/>
            <person name="Ormond D."/>
            <person name="Abdellah Z."/>
            <person name="Brooks K."/>
            <person name="Cherevach I."/>
            <person name="Chillingworth T."/>
            <person name="Woodward J."/>
            <person name="Norberczak H."/>
            <person name="Lord A."/>
            <person name="Arrowsmith C."/>
            <person name="Jagels K."/>
            <person name="Moule S."/>
            <person name="Mungall K."/>
            <person name="Saunders M."/>
            <person name="Whitehead S."/>
            <person name="Chabalgoity J.A."/>
            <person name="Maskell D."/>
            <person name="Humphreys T."/>
            <person name="Roberts M."/>
            <person name="Barrow P.A."/>
            <person name="Dougan G."/>
            <person name="Parkhill J."/>
        </authorList>
    </citation>
    <scope>NUCLEOTIDE SEQUENCE [LARGE SCALE GENOMIC DNA]</scope>
    <source>
        <strain>P125109</strain>
    </source>
</reference>
<keyword id="KW-0012">Acyltransferase</keyword>
<keyword id="KW-0963">Cytoplasm</keyword>
<keyword id="KW-0408">Iron</keyword>
<keyword id="KW-0479">Metal-binding</keyword>
<keyword id="KW-0808">Transferase</keyword>
<keyword id="KW-0819">tRNA processing</keyword>